<keyword id="KW-0963">Cytoplasm</keyword>
<keyword id="KW-0378">Hydrolase</keyword>
<keyword id="KW-0479">Metal-binding</keyword>
<keyword id="KW-0547">Nucleotide-binding</keyword>
<keyword id="KW-1185">Reference proteome</keyword>
<gene>
    <name evidence="1" type="primary">surE</name>
    <name type="ordered locus">Cpha266_2034</name>
</gene>
<name>SURE_CHLPD</name>
<evidence type="ECO:0000255" key="1">
    <source>
        <dbReference type="HAMAP-Rule" id="MF_00060"/>
    </source>
</evidence>
<accession>A1BI19</accession>
<sequence>MDQLKKPHILLCNDDGIEGEGLHALAASMKKIGNITVVAPAEPHSGMSHAMTLGTPLRIKKYYKNNRFFGYTVSGTPVDCVKVALSQILPSKPDLLVSGINYGSNTATNTLYSGTVAAALEGAIQGITSLAFSLATYENADFSYAAKFARKLSKKVLTEGLPPDTILSVNIPNIPESEIQGILVTEQGRSRWEEDAIERHDVYGNPYYWLNGTLMLLDTSLQHDEYAVRKHYVAVTPISCDFTNRDFMGSLEQWNLKK</sequence>
<reference key="1">
    <citation type="submission" date="2006-12" db="EMBL/GenBank/DDBJ databases">
        <title>Complete sequence of Chlorobium phaeobacteroides DSM 266.</title>
        <authorList>
            <consortium name="US DOE Joint Genome Institute"/>
            <person name="Copeland A."/>
            <person name="Lucas S."/>
            <person name="Lapidus A."/>
            <person name="Barry K."/>
            <person name="Detter J.C."/>
            <person name="Glavina del Rio T."/>
            <person name="Hammon N."/>
            <person name="Israni S."/>
            <person name="Pitluck S."/>
            <person name="Goltsman E."/>
            <person name="Schmutz J."/>
            <person name="Larimer F."/>
            <person name="Land M."/>
            <person name="Hauser L."/>
            <person name="Mikhailova N."/>
            <person name="Li T."/>
            <person name="Overmann J."/>
            <person name="Bryant D.A."/>
            <person name="Richardson P."/>
        </authorList>
    </citation>
    <scope>NUCLEOTIDE SEQUENCE [LARGE SCALE GENOMIC DNA]</scope>
    <source>
        <strain>DSM 266 / SMG 266 / 2430</strain>
    </source>
</reference>
<comment type="function">
    <text evidence="1">Nucleotidase that shows phosphatase activity on nucleoside 5'-monophosphates.</text>
</comment>
<comment type="catalytic activity">
    <reaction evidence="1">
        <text>a ribonucleoside 5'-phosphate + H2O = a ribonucleoside + phosphate</text>
        <dbReference type="Rhea" id="RHEA:12484"/>
        <dbReference type="ChEBI" id="CHEBI:15377"/>
        <dbReference type="ChEBI" id="CHEBI:18254"/>
        <dbReference type="ChEBI" id="CHEBI:43474"/>
        <dbReference type="ChEBI" id="CHEBI:58043"/>
        <dbReference type="EC" id="3.1.3.5"/>
    </reaction>
</comment>
<comment type="cofactor">
    <cofactor evidence="1">
        <name>a divalent metal cation</name>
        <dbReference type="ChEBI" id="CHEBI:60240"/>
    </cofactor>
    <text evidence="1">Binds 1 divalent metal cation per subunit.</text>
</comment>
<comment type="subcellular location">
    <subcellularLocation>
        <location evidence="1">Cytoplasm</location>
    </subcellularLocation>
</comment>
<comment type="similarity">
    <text evidence="1">Belongs to the SurE nucleotidase family.</text>
</comment>
<feature type="chain" id="PRO_0000335256" description="5'-nucleotidase SurE">
    <location>
        <begin position="1"/>
        <end position="258"/>
    </location>
</feature>
<feature type="binding site" evidence="1">
    <location>
        <position position="14"/>
    </location>
    <ligand>
        <name>a divalent metal cation</name>
        <dbReference type="ChEBI" id="CHEBI:60240"/>
    </ligand>
</feature>
<feature type="binding site" evidence="1">
    <location>
        <position position="15"/>
    </location>
    <ligand>
        <name>a divalent metal cation</name>
        <dbReference type="ChEBI" id="CHEBI:60240"/>
    </ligand>
</feature>
<feature type="binding site" evidence="1">
    <location>
        <position position="45"/>
    </location>
    <ligand>
        <name>a divalent metal cation</name>
        <dbReference type="ChEBI" id="CHEBI:60240"/>
    </ligand>
</feature>
<feature type="binding site" evidence="1">
    <location>
        <position position="101"/>
    </location>
    <ligand>
        <name>a divalent metal cation</name>
        <dbReference type="ChEBI" id="CHEBI:60240"/>
    </ligand>
</feature>
<proteinExistence type="inferred from homology"/>
<organism>
    <name type="scientific">Chlorobium phaeobacteroides (strain DSM 266 / SMG 266 / 2430)</name>
    <dbReference type="NCBI Taxonomy" id="290317"/>
    <lineage>
        <taxon>Bacteria</taxon>
        <taxon>Pseudomonadati</taxon>
        <taxon>Chlorobiota</taxon>
        <taxon>Chlorobiia</taxon>
        <taxon>Chlorobiales</taxon>
        <taxon>Chlorobiaceae</taxon>
        <taxon>Chlorobium/Pelodictyon group</taxon>
        <taxon>Chlorobium</taxon>
    </lineage>
</organism>
<dbReference type="EC" id="3.1.3.5" evidence="1"/>
<dbReference type="EMBL" id="CP000492">
    <property type="protein sequence ID" value="ABL66046.1"/>
    <property type="molecule type" value="Genomic_DNA"/>
</dbReference>
<dbReference type="RefSeq" id="WP_011745850.1">
    <property type="nucleotide sequence ID" value="NC_008639.1"/>
</dbReference>
<dbReference type="SMR" id="A1BI19"/>
<dbReference type="STRING" id="290317.Cpha266_2034"/>
<dbReference type="KEGG" id="cph:Cpha266_2034"/>
<dbReference type="eggNOG" id="COG0496">
    <property type="taxonomic scope" value="Bacteria"/>
</dbReference>
<dbReference type="HOGENOM" id="CLU_045192_1_0_10"/>
<dbReference type="OrthoDB" id="9780815at2"/>
<dbReference type="Proteomes" id="UP000008701">
    <property type="component" value="Chromosome"/>
</dbReference>
<dbReference type="GO" id="GO:0005737">
    <property type="term" value="C:cytoplasm"/>
    <property type="evidence" value="ECO:0007669"/>
    <property type="project" value="UniProtKB-SubCell"/>
</dbReference>
<dbReference type="GO" id="GO:0008254">
    <property type="term" value="F:3'-nucleotidase activity"/>
    <property type="evidence" value="ECO:0007669"/>
    <property type="project" value="TreeGrafter"/>
</dbReference>
<dbReference type="GO" id="GO:0008253">
    <property type="term" value="F:5'-nucleotidase activity"/>
    <property type="evidence" value="ECO:0007669"/>
    <property type="project" value="UniProtKB-UniRule"/>
</dbReference>
<dbReference type="GO" id="GO:0004309">
    <property type="term" value="F:exopolyphosphatase activity"/>
    <property type="evidence" value="ECO:0007669"/>
    <property type="project" value="TreeGrafter"/>
</dbReference>
<dbReference type="GO" id="GO:0046872">
    <property type="term" value="F:metal ion binding"/>
    <property type="evidence" value="ECO:0007669"/>
    <property type="project" value="UniProtKB-UniRule"/>
</dbReference>
<dbReference type="GO" id="GO:0000166">
    <property type="term" value="F:nucleotide binding"/>
    <property type="evidence" value="ECO:0007669"/>
    <property type="project" value="UniProtKB-KW"/>
</dbReference>
<dbReference type="FunFam" id="3.40.1210.10:FF:000001">
    <property type="entry name" value="5'/3'-nucleotidase SurE"/>
    <property type="match status" value="1"/>
</dbReference>
<dbReference type="Gene3D" id="3.40.1210.10">
    <property type="entry name" value="Survival protein SurE-like phosphatase/nucleotidase"/>
    <property type="match status" value="1"/>
</dbReference>
<dbReference type="HAMAP" id="MF_00060">
    <property type="entry name" value="SurE"/>
    <property type="match status" value="1"/>
</dbReference>
<dbReference type="InterPro" id="IPR030048">
    <property type="entry name" value="SurE"/>
</dbReference>
<dbReference type="InterPro" id="IPR002828">
    <property type="entry name" value="SurE-like_Pase/nucleotidase"/>
</dbReference>
<dbReference type="InterPro" id="IPR036523">
    <property type="entry name" value="SurE-like_sf"/>
</dbReference>
<dbReference type="NCBIfam" id="NF001490">
    <property type="entry name" value="PRK00346.1-4"/>
    <property type="match status" value="1"/>
</dbReference>
<dbReference type="NCBIfam" id="NF001492">
    <property type="entry name" value="PRK00346.2-2"/>
    <property type="match status" value="1"/>
</dbReference>
<dbReference type="NCBIfam" id="NF010542">
    <property type="entry name" value="PRK13932.1"/>
    <property type="match status" value="1"/>
</dbReference>
<dbReference type="NCBIfam" id="TIGR00087">
    <property type="entry name" value="surE"/>
    <property type="match status" value="1"/>
</dbReference>
<dbReference type="PANTHER" id="PTHR30457">
    <property type="entry name" value="5'-NUCLEOTIDASE SURE"/>
    <property type="match status" value="1"/>
</dbReference>
<dbReference type="PANTHER" id="PTHR30457:SF12">
    <property type="entry name" value="5'_3'-NUCLEOTIDASE SURE"/>
    <property type="match status" value="1"/>
</dbReference>
<dbReference type="Pfam" id="PF01975">
    <property type="entry name" value="SurE"/>
    <property type="match status" value="1"/>
</dbReference>
<dbReference type="SUPFAM" id="SSF64167">
    <property type="entry name" value="SurE-like"/>
    <property type="match status" value="1"/>
</dbReference>
<protein>
    <recommendedName>
        <fullName evidence="1">5'-nucleotidase SurE</fullName>
        <ecNumber evidence="1">3.1.3.5</ecNumber>
    </recommendedName>
    <alternativeName>
        <fullName evidence="1">Nucleoside 5'-monophosphate phosphohydrolase</fullName>
    </alternativeName>
</protein>